<name>RL30_PORG3</name>
<evidence type="ECO:0000255" key="1">
    <source>
        <dbReference type="HAMAP-Rule" id="MF_01371"/>
    </source>
</evidence>
<evidence type="ECO:0000305" key="2"/>
<reference key="1">
    <citation type="journal article" date="2008" name="DNA Res.">
        <title>Determination of the genome sequence of Porphyromonas gingivalis strain ATCC 33277 and genomic comparison with strain W83 revealed extensive genome rearrangements in P. gingivalis.</title>
        <authorList>
            <person name="Naito M."/>
            <person name="Hirakawa H."/>
            <person name="Yamashita A."/>
            <person name="Ohara N."/>
            <person name="Shoji M."/>
            <person name="Yukitake H."/>
            <person name="Nakayama K."/>
            <person name="Toh H."/>
            <person name="Yoshimura F."/>
            <person name="Kuhara S."/>
            <person name="Hattori M."/>
            <person name="Hayashi T."/>
            <person name="Nakayama K."/>
        </authorList>
    </citation>
    <scope>NUCLEOTIDE SEQUENCE [LARGE SCALE GENOMIC DNA]</scope>
    <source>
        <strain>ATCC 33277 / DSM 20709 / CIP 103683 / JCM 12257 / NCTC 11834 / 2561</strain>
    </source>
</reference>
<feature type="chain" id="PRO_1000144701" description="Large ribosomal subunit protein uL30">
    <location>
        <begin position="1"/>
        <end position="58"/>
    </location>
</feature>
<keyword id="KW-0687">Ribonucleoprotein</keyword>
<keyword id="KW-0689">Ribosomal protein</keyword>
<accession>B2RLX4</accession>
<protein>
    <recommendedName>
        <fullName evidence="1">Large ribosomal subunit protein uL30</fullName>
    </recommendedName>
    <alternativeName>
        <fullName evidence="2">50S ribosomal protein L30</fullName>
    </alternativeName>
</protein>
<proteinExistence type="inferred from homology"/>
<gene>
    <name evidence="1" type="primary">rpmD</name>
    <name type="ordered locus">PGN_1850</name>
</gene>
<sequence length="58" mass="6686">MAKIKIQQVRSRIRCPKDQKRTLDALGLRKLNQIVEHEATPSILGMVNKVRHLVLIVE</sequence>
<comment type="subunit">
    <text evidence="1">Part of the 50S ribosomal subunit.</text>
</comment>
<comment type="similarity">
    <text evidence="1">Belongs to the universal ribosomal protein uL30 family.</text>
</comment>
<dbReference type="EMBL" id="AP009380">
    <property type="protein sequence ID" value="BAG34369.1"/>
    <property type="molecule type" value="Genomic_DNA"/>
</dbReference>
<dbReference type="RefSeq" id="WP_010956442.1">
    <property type="nucleotide sequence ID" value="NZ_CP025930.1"/>
</dbReference>
<dbReference type="SMR" id="B2RLX4"/>
<dbReference type="GeneID" id="57239578"/>
<dbReference type="KEGG" id="pgn:PGN_1850"/>
<dbReference type="eggNOG" id="COG1841">
    <property type="taxonomic scope" value="Bacteria"/>
</dbReference>
<dbReference type="HOGENOM" id="CLU_131047_1_1_10"/>
<dbReference type="OrthoDB" id="9812790at2"/>
<dbReference type="BioCyc" id="PGIN431947:G1G2V-2064-MONOMER"/>
<dbReference type="Proteomes" id="UP000008842">
    <property type="component" value="Chromosome"/>
</dbReference>
<dbReference type="GO" id="GO:0022625">
    <property type="term" value="C:cytosolic large ribosomal subunit"/>
    <property type="evidence" value="ECO:0007669"/>
    <property type="project" value="TreeGrafter"/>
</dbReference>
<dbReference type="GO" id="GO:0003735">
    <property type="term" value="F:structural constituent of ribosome"/>
    <property type="evidence" value="ECO:0007669"/>
    <property type="project" value="InterPro"/>
</dbReference>
<dbReference type="GO" id="GO:0006412">
    <property type="term" value="P:translation"/>
    <property type="evidence" value="ECO:0007669"/>
    <property type="project" value="UniProtKB-UniRule"/>
</dbReference>
<dbReference type="CDD" id="cd01658">
    <property type="entry name" value="Ribosomal_L30"/>
    <property type="match status" value="1"/>
</dbReference>
<dbReference type="FunFam" id="3.30.1390.20:FF:000001">
    <property type="entry name" value="50S ribosomal protein L30"/>
    <property type="match status" value="1"/>
</dbReference>
<dbReference type="Gene3D" id="3.30.1390.20">
    <property type="entry name" value="Ribosomal protein L30, ferredoxin-like fold domain"/>
    <property type="match status" value="1"/>
</dbReference>
<dbReference type="HAMAP" id="MF_01371_B">
    <property type="entry name" value="Ribosomal_uL30_B"/>
    <property type="match status" value="1"/>
</dbReference>
<dbReference type="InterPro" id="IPR036919">
    <property type="entry name" value="Ribo_uL30_ferredoxin-like_sf"/>
</dbReference>
<dbReference type="InterPro" id="IPR005996">
    <property type="entry name" value="Ribosomal_uL30_bac-type"/>
</dbReference>
<dbReference type="InterPro" id="IPR018038">
    <property type="entry name" value="Ribosomal_uL30_CS"/>
</dbReference>
<dbReference type="InterPro" id="IPR016082">
    <property type="entry name" value="Ribosomal_uL30_ferredoxin-like"/>
</dbReference>
<dbReference type="NCBIfam" id="TIGR01308">
    <property type="entry name" value="rpmD_bact"/>
    <property type="match status" value="1"/>
</dbReference>
<dbReference type="PANTHER" id="PTHR15892:SF2">
    <property type="entry name" value="LARGE RIBOSOMAL SUBUNIT PROTEIN UL30M"/>
    <property type="match status" value="1"/>
</dbReference>
<dbReference type="PANTHER" id="PTHR15892">
    <property type="entry name" value="MITOCHONDRIAL RIBOSOMAL PROTEIN L30"/>
    <property type="match status" value="1"/>
</dbReference>
<dbReference type="Pfam" id="PF00327">
    <property type="entry name" value="Ribosomal_L30"/>
    <property type="match status" value="1"/>
</dbReference>
<dbReference type="PIRSF" id="PIRSF002211">
    <property type="entry name" value="Ribosomal_L30_bac-type"/>
    <property type="match status" value="1"/>
</dbReference>
<dbReference type="SUPFAM" id="SSF55129">
    <property type="entry name" value="Ribosomal protein L30p/L7e"/>
    <property type="match status" value="1"/>
</dbReference>
<dbReference type="PROSITE" id="PS00634">
    <property type="entry name" value="RIBOSOMAL_L30"/>
    <property type="match status" value="1"/>
</dbReference>
<organism>
    <name type="scientific">Porphyromonas gingivalis (strain ATCC 33277 / DSM 20709 / CIP 103683 / JCM 12257 / NCTC 11834 / 2561)</name>
    <dbReference type="NCBI Taxonomy" id="431947"/>
    <lineage>
        <taxon>Bacteria</taxon>
        <taxon>Pseudomonadati</taxon>
        <taxon>Bacteroidota</taxon>
        <taxon>Bacteroidia</taxon>
        <taxon>Bacteroidales</taxon>
        <taxon>Porphyromonadaceae</taxon>
        <taxon>Porphyromonas</taxon>
    </lineage>
</organism>